<name>SLYX_PROMH</name>
<gene>
    <name evidence="1" type="primary">slyX</name>
    <name type="ordered locus">PMI2802</name>
</gene>
<comment type="similarity">
    <text evidence="1">Belongs to the SlyX family.</text>
</comment>
<organism>
    <name type="scientific">Proteus mirabilis (strain HI4320)</name>
    <dbReference type="NCBI Taxonomy" id="529507"/>
    <lineage>
        <taxon>Bacteria</taxon>
        <taxon>Pseudomonadati</taxon>
        <taxon>Pseudomonadota</taxon>
        <taxon>Gammaproteobacteria</taxon>
        <taxon>Enterobacterales</taxon>
        <taxon>Morganellaceae</taxon>
        <taxon>Proteus</taxon>
    </lineage>
</organism>
<keyword id="KW-1185">Reference proteome</keyword>
<protein>
    <recommendedName>
        <fullName evidence="1">Protein SlyX</fullName>
    </recommendedName>
</protein>
<proteinExistence type="inferred from homology"/>
<evidence type="ECO:0000255" key="1">
    <source>
        <dbReference type="HAMAP-Rule" id="MF_00715"/>
    </source>
</evidence>
<evidence type="ECO:0000256" key="2">
    <source>
        <dbReference type="SAM" id="MobiDB-lite"/>
    </source>
</evidence>
<feature type="chain" id="PRO_1000195843" description="Protein SlyX">
    <location>
        <begin position="1"/>
        <end position="72"/>
    </location>
</feature>
<feature type="region of interest" description="Disordered" evidence="2">
    <location>
        <begin position="53"/>
        <end position="72"/>
    </location>
</feature>
<reference key="1">
    <citation type="journal article" date="2008" name="J. Bacteriol.">
        <title>Complete genome sequence of uropathogenic Proteus mirabilis, a master of both adherence and motility.</title>
        <authorList>
            <person name="Pearson M.M."/>
            <person name="Sebaihia M."/>
            <person name="Churcher C."/>
            <person name="Quail M.A."/>
            <person name="Seshasayee A.S."/>
            <person name="Luscombe N.M."/>
            <person name="Abdellah Z."/>
            <person name="Arrosmith C."/>
            <person name="Atkin B."/>
            <person name="Chillingworth T."/>
            <person name="Hauser H."/>
            <person name="Jagels K."/>
            <person name="Moule S."/>
            <person name="Mungall K."/>
            <person name="Norbertczak H."/>
            <person name="Rabbinowitsch E."/>
            <person name="Walker D."/>
            <person name="Whithead S."/>
            <person name="Thomson N.R."/>
            <person name="Rather P.N."/>
            <person name="Parkhill J."/>
            <person name="Mobley H.L.T."/>
        </authorList>
    </citation>
    <scope>NUCLEOTIDE SEQUENCE [LARGE SCALE GENOMIC DNA]</scope>
    <source>
        <strain>HI4320</strain>
    </source>
</reference>
<dbReference type="EMBL" id="AM942759">
    <property type="protein sequence ID" value="CAR45522.1"/>
    <property type="molecule type" value="Genomic_DNA"/>
</dbReference>
<dbReference type="RefSeq" id="WP_004246888.1">
    <property type="nucleotide sequence ID" value="NC_010554.1"/>
</dbReference>
<dbReference type="SMR" id="B4EYW6"/>
<dbReference type="EnsemblBacteria" id="CAR45522">
    <property type="protein sequence ID" value="CAR45522"/>
    <property type="gene ID" value="PMI2802"/>
</dbReference>
<dbReference type="GeneID" id="6801312"/>
<dbReference type="KEGG" id="pmr:PMI2802"/>
<dbReference type="eggNOG" id="COG2900">
    <property type="taxonomic scope" value="Bacteria"/>
</dbReference>
<dbReference type="HOGENOM" id="CLU_180796_4_2_6"/>
<dbReference type="Proteomes" id="UP000008319">
    <property type="component" value="Chromosome"/>
</dbReference>
<dbReference type="Gene3D" id="1.20.5.300">
    <property type="match status" value="1"/>
</dbReference>
<dbReference type="HAMAP" id="MF_00715">
    <property type="entry name" value="SlyX"/>
    <property type="match status" value="1"/>
</dbReference>
<dbReference type="InterPro" id="IPR007236">
    <property type="entry name" value="SlyX"/>
</dbReference>
<dbReference type="PANTHER" id="PTHR36508">
    <property type="entry name" value="PROTEIN SLYX"/>
    <property type="match status" value="1"/>
</dbReference>
<dbReference type="PANTHER" id="PTHR36508:SF1">
    <property type="entry name" value="PROTEIN SLYX"/>
    <property type="match status" value="1"/>
</dbReference>
<dbReference type="Pfam" id="PF04102">
    <property type="entry name" value="SlyX"/>
    <property type="match status" value="1"/>
</dbReference>
<accession>B4EYW6</accession>
<sequence length="72" mass="8356">MDIKEIEELLIQLESKIAFQDATIEELNQVVTQQQIEISRFKEALKIVTERLKSSQSSMLARPEDETPPPHY</sequence>